<organism>
    <name type="scientific">Methanococcoides burtonii (strain DSM 6242 / NBRC 107633 / OCM 468 / ACE-M)</name>
    <dbReference type="NCBI Taxonomy" id="259564"/>
    <lineage>
        <taxon>Archaea</taxon>
        <taxon>Methanobacteriati</taxon>
        <taxon>Methanobacteriota</taxon>
        <taxon>Stenosarchaea group</taxon>
        <taxon>Methanomicrobia</taxon>
        <taxon>Methanosarcinales</taxon>
        <taxon>Methanosarcinaceae</taxon>
        <taxon>Methanococcoides</taxon>
    </lineage>
</organism>
<evidence type="ECO:0000255" key="1">
    <source>
        <dbReference type="HAMAP-Rule" id="MF_01023"/>
    </source>
</evidence>
<keyword id="KW-0028">Amino-acid biosynthesis</keyword>
<keyword id="KW-0032">Aminotransferase</keyword>
<keyword id="KW-0368">Histidine biosynthesis</keyword>
<keyword id="KW-0663">Pyridoxal phosphate</keyword>
<keyword id="KW-0808">Transferase</keyword>
<comment type="catalytic activity">
    <reaction evidence="1">
        <text>L-histidinol phosphate + 2-oxoglutarate = 3-(imidazol-4-yl)-2-oxopropyl phosphate + L-glutamate</text>
        <dbReference type="Rhea" id="RHEA:23744"/>
        <dbReference type="ChEBI" id="CHEBI:16810"/>
        <dbReference type="ChEBI" id="CHEBI:29985"/>
        <dbReference type="ChEBI" id="CHEBI:57766"/>
        <dbReference type="ChEBI" id="CHEBI:57980"/>
        <dbReference type="EC" id="2.6.1.9"/>
    </reaction>
</comment>
<comment type="cofactor">
    <cofactor evidence="1">
        <name>pyridoxal 5'-phosphate</name>
        <dbReference type="ChEBI" id="CHEBI:597326"/>
    </cofactor>
</comment>
<comment type="pathway">
    <text evidence="1">Amino-acid biosynthesis; L-histidine biosynthesis; L-histidine from 5-phospho-alpha-D-ribose 1-diphosphate: step 7/9.</text>
</comment>
<comment type="similarity">
    <text evidence="1">Belongs to the class-II pyridoxal-phosphate-dependent aminotransferase family. Histidinol-phosphate aminotransferase subfamily.</text>
</comment>
<sequence length="360" mass="39055">MARYELIKDEIGSIAKYVPGRSIEDIVKNYGLEPSSVIKLGSNENPLGPSPKAVEALIANAQGISIYPSADARELVDAISEYTDIPAANIVASGPGMDGLLDGLARLVIANGDEVVITTPTFSYYEIAARANGATTVYVQREKDFSINVDKLLAALTPNTKMIFLCSPNNPTGNVIPEEDILKIATATDALVFVDEAYVEFAEKNIAHLVLQHDNIIVGRTFSKAFGLAGMRMGYGIMPEWLREEYMKIATPFNVSTAAMAAGIAALSDTEHLNKSIELTVKGKKFLQEELPFKVYDTQANFVLVDVAPHKARDVTTELLKKGIIVRDCTSFAHAGLSLIRVTIGTKEQNEKVVKAFSDI</sequence>
<proteinExistence type="inferred from homology"/>
<protein>
    <recommendedName>
        <fullName evidence="1">Histidinol-phosphate aminotransferase</fullName>
        <ecNumber evidence="1">2.6.1.9</ecNumber>
    </recommendedName>
    <alternativeName>
        <fullName evidence="1">Imidazole acetol-phosphate transaminase</fullName>
    </alternativeName>
</protein>
<accession>Q12U08</accession>
<reference key="1">
    <citation type="journal article" date="2009" name="ISME J.">
        <title>The genome sequence of the psychrophilic archaeon, Methanococcoides burtonii: the role of genome evolution in cold adaptation.</title>
        <authorList>
            <person name="Allen M.A."/>
            <person name="Lauro F.M."/>
            <person name="Williams T.J."/>
            <person name="Burg D."/>
            <person name="Siddiqui K.S."/>
            <person name="De Francisci D."/>
            <person name="Chong K.W."/>
            <person name="Pilak O."/>
            <person name="Chew H.H."/>
            <person name="De Maere M.Z."/>
            <person name="Ting L."/>
            <person name="Katrib M."/>
            <person name="Ng C."/>
            <person name="Sowers K.R."/>
            <person name="Galperin M.Y."/>
            <person name="Anderson I.J."/>
            <person name="Ivanova N."/>
            <person name="Dalin E."/>
            <person name="Martinez M."/>
            <person name="Lapidus A."/>
            <person name="Hauser L."/>
            <person name="Land M."/>
            <person name="Thomas T."/>
            <person name="Cavicchioli R."/>
        </authorList>
    </citation>
    <scope>NUCLEOTIDE SEQUENCE [LARGE SCALE GENOMIC DNA]</scope>
    <source>
        <strain>DSM 6242 / NBRC 107633 / OCM 468 / ACE-M</strain>
    </source>
</reference>
<feature type="chain" id="PRO_0000319796" description="Histidinol-phosphate aminotransferase">
    <location>
        <begin position="1"/>
        <end position="360"/>
    </location>
</feature>
<feature type="modified residue" description="N6-(pyridoxal phosphate)lysine" evidence="1">
    <location>
        <position position="224"/>
    </location>
</feature>
<dbReference type="EC" id="2.6.1.9" evidence="1"/>
<dbReference type="EMBL" id="CP000300">
    <property type="protein sequence ID" value="ABE53068.1"/>
    <property type="molecule type" value="Genomic_DNA"/>
</dbReference>
<dbReference type="RefSeq" id="WP_011500204.1">
    <property type="nucleotide sequence ID" value="NC_007955.1"/>
</dbReference>
<dbReference type="SMR" id="Q12U08"/>
<dbReference type="STRING" id="259564.Mbur_2203"/>
<dbReference type="GeneID" id="3998814"/>
<dbReference type="KEGG" id="mbu:Mbur_2203"/>
<dbReference type="HOGENOM" id="CLU_017584_3_3_2"/>
<dbReference type="OrthoDB" id="9929at2157"/>
<dbReference type="UniPathway" id="UPA00031">
    <property type="reaction ID" value="UER00012"/>
</dbReference>
<dbReference type="Proteomes" id="UP000001979">
    <property type="component" value="Chromosome"/>
</dbReference>
<dbReference type="GO" id="GO:0004400">
    <property type="term" value="F:histidinol-phosphate transaminase activity"/>
    <property type="evidence" value="ECO:0007669"/>
    <property type="project" value="UniProtKB-UniRule"/>
</dbReference>
<dbReference type="GO" id="GO:0030170">
    <property type="term" value="F:pyridoxal phosphate binding"/>
    <property type="evidence" value="ECO:0007669"/>
    <property type="project" value="InterPro"/>
</dbReference>
<dbReference type="GO" id="GO:0000105">
    <property type="term" value="P:L-histidine biosynthetic process"/>
    <property type="evidence" value="ECO:0007669"/>
    <property type="project" value="UniProtKB-UniRule"/>
</dbReference>
<dbReference type="CDD" id="cd00609">
    <property type="entry name" value="AAT_like"/>
    <property type="match status" value="1"/>
</dbReference>
<dbReference type="Gene3D" id="3.90.1150.10">
    <property type="entry name" value="Aspartate Aminotransferase, domain 1"/>
    <property type="match status" value="1"/>
</dbReference>
<dbReference type="Gene3D" id="3.40.640.10">
    <property type="entry name" value="Type I PLP-dependent aspartate aminotransferase-like (Major domain)"/>
    <property type="match status" value="1"/>
</dbReference>
<dbReference type="HAMAP" id="MF_01023">
    <property type="entry name" value="HisC_aminotrans_2"/>
    <property type="match status" value="1"/>
</dbReference>
<dbReference type="InterPro" id="IPR001917">
    <property type="entry name" value="Aminotrans_II_pyridoxalP_BS"/>
</dbReference>
<dbReference type="InterPro" id="IPR004839">
    <property type="entry name" value="Aminotransferase_I/II_large"/>
</dbReference>
<dbReference type="InterPro" id="IPR005861">
    <property type="entry name" value="HisP_aminotrans"/>
</dbReference>
<dbReference type="InterPro" id="IPR015424">
    <property type="entry name" value="PyrdxlP-dep_Trfase"/>
</dbReference>
<dbReference type="InterPro" id="IPR015421">
    <property type="entry name" value="PyrdxlP-dep_Trfase_major"/>
</dbReference>
<dbReference type="InterPro" id="IPR015422">
    <property type="entry name" value="PyrdxlP-dep_Trfase_small"/>
</dbReference>
<dbReference type="NCBIfam" id="TIGR01141">
    <property type="entry name" value="hisC"/>
    <property type="match status" value="1"/>
</dbReference>
<dbReference type="PANTHER" id="PTHR42885:SF2">
    <property type="entry name" value="HISTIDINOL-PHOSPHATE AMINOTRANSFERASE"/>
    <property type="match status" value="1"/>
</dbReference>
<dbReference type="PANTHER" id="PTHR42885">
    <property type="entry name" value="HISTIDINOL-PHOSPHATE AMINOTRANSFERASE-RELATED"/>
    <property type="match status" value="1"/>
</dbReference>
<dbReference type="Pfam" id="PF00155">
    <property type="entry name" value="Aminotran_1_2"/>
    <property type="match status" value="1"/>
</dbReference>
<dbReference type="SUPFAM" id="SSF53383">
    <property type="entry name" value="PLP-dependent transferases"/>
    <property type="match status" value="1"/>
</dbReference>
<dbReference type="PROSITE" id="PS00599">
    <property type="entry name" value="AA_TRANSFER_CLASS_2"/>
    <property type="match status" value="1"/>
</dbReference>
<gene>
    <name evidence="1" type="primary">hisC</name>
    <name type="ordered locus">Mbur_2203</name>
</gene>
<name>HIS8_METBU</name>